<keyword id="KW-1185">Reference proteome</keyword>
<keyword id="KW-0687">Ribonucleoprotein</keyword>
<keyword id="KW-0689">Ribosomal protein</keyword>
<keyword id="KW-0694">RNA-binding</keyword>
<keyword id="KW-0699">rRNA-binding</keyword>
<sequence>MKLNELKPAEGSRKVRNRVGRGDSSGNGKTAGRGQKGQKARSKTRLGFEGGQMPLYRRIPKRGFTNINRKEFAVVNLSALNVFDDGAEVTPAALVEAGIVKNEKAGIKILGNGELSKKLTVKAAKFSKSAAEAIEAAGGKTEVI</sequence>
<comment type="function">
    <text evidence="1">Binds to the 23S rRNA.</text>
</comment>
<comment type="subunit">
    <text evidence="1">Part of the 50S ribosomal subunit.</text>
</comment>
<comment type="similarity">
    <text evidence="1">Belongs to the universal ribosomal protein uL15 family.</text>
</comment>
<evidence type="ECO:0000255" key="1">
    <source>
        <dbReference type="HAMAP-Rule" id="MF_01341"/>
    </source>
</evidence>
<evidence type="ECO:0000256" key="2">
    <source>
        <dbReference type="SAM" id="MobiDB-lite"/>
    </source>
</evidence>
<evidence type="ECO:0000305" key="3"/>
<feature type="chain" id="PRO_1000054478" description="Large ribosomal subunit protein uL15">
    <location>
        <begin position="1"/>
        <end position="144"/>
    </location>
</feature>
<feature type="region of interest" description="Disordered" evidence="2">
    <location>
        <begin position="1"/>
        <end position="47"/>
    </location>
</feature>
<feature type="compositionally biased region" description="Basic and acidic residues" evidence="2">
    <location>
        <begin position="1"/>
        <end position="13"/>
    </location>
</feature>
<feature type="compositionally biased region" description="Gly residues" evidence="2">
    <location>
        <begin position="23"/>
        <end position="35"/>
    </location>
</feature>
<proteinExistence type="inferred from homology"/>
<dbReference type="EMBL" id="CP000416">
    <property type="protein sequence ID" value="ABJ64746.1"/>
    <property type="molecule type" value="Genomic_DNA"/>
</dbReference>
<dbReference type="RefSeq" id="WP_011668480.1">
    <property type="nucleotide sequence ID" value="NC_008497.1"/>
</dbReference>
<dbReference type="SMR" id="Q03PX6"/>
<dbReference type="STRING" id="387344.LVIS_1671"/>
<dbReference type="KEGG" id="lbr:LVIS_1671"/>
<dbReference type="eggNOG" id="COG0200">
    <property type="taxonomic scope" value="Bacteria"/>
</dbReference>
<dbReference type="HOGENOM" id="CLU_055188_4_2_9"/>
<dbReference type="Proteomes" id="UP000001652">
    <property type="component" value="Chromosome"/>
</dbReference>
<dbReference type="GO" id="GO:0022625">
    <property type="term" value="C:cytosolic large ribosomal subunit"/>
    <property type="evidence" value="ECO:0007669"/>
    <property type="project" value="TreeGrafter"/>
</dbReference>
<dbReference type="GO" id="GO:0019843">
    <property type="term" value="F:rRNA binding"/>
    <property type="evidence" value="ECO:0007669"/>
    <property type="project" value="UniProtKB-UniRule"/>
</dbReference>
<dbReference type="GO" id="GO:0003735">
    <property type="term" value="F:structural constituent of ribosome"/>
    <property type="evidence" value="ECO:0007669"/>
    <property type="project" value="InterPro"/>
</dbReference>
<dbReference type="GO" id="GO:0006412">
    <property type="term" value="P:translation"/>
    <property type="evidence" value="ECO:0007669"/>
    <property type="project" value="UniProtKB-UniRule"/>
</dbReference>
<dbReference type="FunFam" id="3.100.10.10:FF:000004">
    <property type="entry name" value="50S ribosomal protein L15"/>
    <property type="match status" value="1"/>
</dbReference>
<dbReference type="Gene3D" id="3.100.10.10">
    <property type="match status" value="1"/>
</dbReference>
<dbReference type="HAMAP" id="MF_01341">
    <property type="entry name" value="Ribosomal_uL15"/>
    <property type="match status" value="1"/>
</dbReference>
<dbReference type="InterPro" id="IPR030878">
    <property type="entry name" value="Ribosomal_uL15"/>
</dbReference>
<dbReference type="InterPro" id="IPR021131">
    <property type="entry name" value="Ribosomal_uL15/eL18"/>
</dbReference>
<dbReference type="InterPro" id="IPR036227">
    <property type="entry name" value="Ribosomal_uL15/eL18_sf"/>
</dbReference>
<dbReference type="InterPro" id="IPR005749">
    <property type="entry name" value="Ribosomal_uL15_bac-type"/>
</dbReference>
<dbReference type="InterPro" id="IPR001196">
    <property type="entry name" value="Ribosomal_uL15_CS"/>
</dbReference>
<dbReference type="NCBIfam" id="TIGR01071">
    <property type="entry name" value="rplO_bact"/>
    <property type="match status" value="1"/>
</dbReference>
<dbReference type="PANTHER" id="PTHR12934">
    <property type="entry name" value="50S RIBOSOMAL PROTEIN L15"/>
    <property type="match status" value="1"/>
</dbReference>
<dbReference type="PANTHER" id="PTHR12934:SF11">
    <property type="entry name" value="LARGE RIBOSOMAL SUBUNIT PROTEIN UL15M"/>
    <property type="match status" value="1"/>
</dbReference>
<dbReference type="Pfam" id="PF00828">
    <property type="entry name" value="Ribosomal_L27A"/>
    <property type="match status" value="1"/>
</dbReference>
<dbReference type="SUPFAM" id="SSF52080">
    <property type="entry name" value="Ribosomal proteins L15p and L18e"/>
    <property type="match status" value="1"/>
</dbReference>
<dbReference type="PROSITE" id="PS00475">
    <property type="entry name" value="RIBOSOMAL_L15"/>
    <property type="match status" value="1"/>
</dbReference>
<gene>
    <name evidence="1" type="primary">rplO</name>
    <name type="ordered locus">LVIS_1671</name>
</gene>
<organism>
    <name type="scientific">Levilactobacillus brevis (strain ATCC 367 / BCRC 12310 / CIP 105137 / JCM 1170 / LMG 11437 / NCIMB 947 / NCTC 947)</name>
    <name type="common">Lactobacillus brevis</name>
    <dbReference type="NCBI Taxonomy" id="387344"/>
    <lineage>
        <taxon>Bacteria</taxon>
        <taxon>Bacillati</taxon>
        <taxon>Bacillota</taxon>
        <taxon>Bacilli</taxon>
        <taxon>Lactobacillales</taxon>
        <taxon>Lactobacillaceae</taxon>
        <taxon>Levilactobacillus</taxon>
    </lineage>
</organism>
<name>RL15_LEVBA</name>
<reference key="1">
    <citation type="journal article" date="2006" name="Proc. Natl. Acad. Sci. U.S.A.">
        <title>Comparative genomics of the lactic acid bacteria.</title>
        <authorList>
            <person name="Makarova K.S."/>
            <person name="Slesarev A."/>
            <person name="Wolf Y.I."/>
            <person name="Sorokin A."/>
            <person name="Mirkin B."/>
            <person name="Koonin E.V."/>
            <person name="Pavlov A."/>
            <person name="Pavlova N."/>
            <person name="Karamychev V."/>
            <person name="Polouchine N."/>
            <person name="Shakhova V."/>
            <person name="Grigoriev I."/>
            <person name="Lou Y."/>
            <person name="Rohksar D."/>
            <person name="Lucas S."/>
            <person name="Huang K."/>
            <person name="Goodstein D.M."/>
            <person name="Hawkins T."/>
            <person name="Plengvidhya V."/>
            <person name="Welker D."/>
            <person name="Hughes J."/>
            <person name="Goh Y."/>
            <person name="Benson A."/>
            <person name="Baldwin K."/>
            <person name="Lee J.-H."/>
            <person name="Diaz-Muniz I."/>
            <person name="Dosti B."/>
            <person name="Smeianov V."/>
            <person name="Wechter W."/>
            <person name="Barabote R."/>
            <person name="Lorca G."/>
            <person name="Altermann E."/>
            <person name="Barrangou R."/>
            <person name="Ganesan B."/>
            <person name="Xie Y."/>
            <person name="Rawsthorne H."/>
            <person name="Tamir D."/>
            <person name="Parker C."/>
            <person name="Breidt F."/>
            <person name="Broadbent J.R."/>
            <person name="Hutkins R."/>
            <person name="O'Sullivan D."/>
            <person name="Steele J."/>
            <person name="Unlu G."/>
            <person name="Saier M.H. Jr."/>
            <person name="Klaenhammer T."/>
            <person name="Richardson P."/>
            <person name="Kozyavkin S."/>
            <person name="Weimer B.C."/>
            <person name="Mills D.A."/>
        </authorList>
    </citation>
    <scope>NUCLEOTIDE SEQUENCE [LARGE SCALE GENOMIC DNA]</scope>
    <source>
        <strain>ATCC 367 / BCRC 12310 / CIP 105137 / JCM 1170 / LMG 11437 / NCIMB 947 / NCTC 947</strain>
    </source>
</reference>
<accession>Q03PX6</accession>
<protein>
    <recommendedName>
        <fullName evidence="1">Large ribosomal subunit protein uL15</fullName>
    </recommendedName>
    <alternativeName>
        <fullName evidence="3">50S ribosomal protein L15</fullName>
    </alternativeName>
</protein>